<name>CSE1_ECOLI</name>
<accession>Q46901</accession>
<accession>Q2MA69</accession>
<gene>
    <name type="primary">casA</name>
    <name type="synonym">cse1</name>
    <name type="synonym">ygcL</name>
    <name type="ordered locus">b2760</name>
    <name type="ordered locus">JW2730</name>
</gene>
<protein>
    <recommendedName>
        <fullName>CRISPR system Cascade subunit CasA</fullName>
    </recommendedName>
    <alternativeName>
        <fullName>CRISPR type I-E/Ecoli-associated protein CasA/Cse1</fullName>
    </alternativeName>
    <alternativeName>
        <fullName>CRISPR-associated protein CasA/Cse1</fullName>
    </alternativeName>
</protein>
<comment type="function">
    <text>CRISPR (clustered regularly interspaced short palindromic repeat), is an adaptive immune system that provides protection against mobile genetic elements (viruses, transposable elements and conjugative plasmids). CRISPR clusters contain sequences complementary to antecedent mobile elements and target invading nucleic acids. CRISPR clusters are transcribed and processed into CRISPR RNA (crRNA).</text>
</comment>
<comment type="function">
    <text>A component of Cascade, which participates in CRISPR interference, the third stage of CRISPR immunity. Cascade binds both crRNA and in a sequence-specific manner negatively supercoiled dsDNA target. This leads to the formation of an R-loop in which the crRNA binds the target DNA, displacing the noncomplementary strand. Cas3 is recruited to Cascade, probably via interactions with CasA, nicks target DNA and then unwinds and cleaves the target, leading to DNA degradation and invader neutralization. CasA is not required for formation of Cascade, but probably enhances binding to and subsequent recognition of both target dsDNA and ssDNA.</text>
</comment>
<comment type="subunit">
    <text evidence="1 5 6 7 8">Part of the Cascade ribonucleoprotein complex, with stoichiometry CasA(1),CasB(2),CasC(6),CasD(1),CasE(1)-crRNA(1). Interacts directly with the 5' end of crRNA, CasB, CasD and CasE. Binding of target ssRNA or dsDNA causes a conformational change in the Cascade complex; CasA is required for high affinity target DNA binding. Interacts with Cas3 once Cascade has recognized target DNA.</text>
</comment>
<comment type="induction">
    <text evidence="2 3 4 5">Repressed by H-NS, activated by LeuO. Activated by the BaeSR two-component regulatory system, possibly due to envelope stress. Part of the casABCDE-ygbT-ygbF operon.</text>
</comment>
<comment type="mass spectrometry" mass="55972.4" error="14.8" method="Unknown" evidence="6"/>
<comment type="disruption phenotype">
    <text evidence="1 5 6">Loss of resistance to bacteriophage lambda infection, loss of plasmid silencing.</text>
</comment>
<comment type="similarity">
    <text evidence="10">Belongs to the CRISPR associated protein CasA/Cse1 family. Type I-E/Ecoli subfamily.</text>
</comment>
<keyword id="KW-0002">3D-structure</keyword>
<keyword id="KW-0051">Antiviral defense</keyword>
<keyword id="KW-0238">DNA-binding</keyword>
<keyword id="KW-1185">Reference proteome</keyword>
<keyword id="KW-0694">RNA-binding</keyword>
<proteinExistence type="evidence at protein level"/>
<organism>
    <name type="scientific">Escherichia coli (strain K12)</name>
    <dbReference type="NCBI Taxonomy" id="83333"/>
    <lineage>
        <taxon>Bacteria</taxon>
        <taxon>Pseudomonadati</taxon>
        <taxon>Pseudomonadota</taxon>
        <taxon>Gammaproteobacteria</taxon>
        <taxon>Enterobacterales</taxon>
        <taxon>Enterobacteriaceae</taxon>
        <taxon>Escherichia</taxon>
    </lineage>
</organism>
<evidence type="ECO:0000269" key="1">
    <source>
    </source>
</evidence>
<evidence type="ECO:0000269" key="2">
    <source>
    </source>
</evidence>
<evidence type="ECO:0000269" key="3">
    <source>
    </source>
</evidence>
<evidence type="ECO:0000269" key="4">
    <source>
    </source>
</evidence>
<evidence type="ECO:0000269" key="5">
    <source>
    </source>
</evidence>
<evidence type="ECO:0000269" key="6">
    <source>
    </source>
</evidence>
<evidence type="ECO:0000269" key="7">
    <source>
    </source>
</evidence>
<evidence type="ECO:0000269" key="8">
    <source>
    </source>
</evidence>
<evidence type="ECO:0000269" key="9">
    <source>
    </source>
</evidence>
<evidence type="ECO:0000305" key="10"/>
<evidence type="ECO:0007829" key="11">
    <source>
        <dbReference type="PDB" id="4U7U"/>
    </source>
</evidence>
<evidence type="ECO:0007829" key="12">
    <source>
        <dbReference type="PDB" id="5H9F"/>
    </source>
</evidence>
<dbReference type="EMBL" id="U29579">
    <property type="protein sequence ID" value="AAA69270.1"/>
    <property type="molecule type" value="Genomic_DNA"/>
</dbReference>
<dbReference type="EMBL" id="U00096">
    <property type="protein sequence ID" value="AAC75802.1"/>
    <property type="molecule type" value="Genomic_DNA"/>
</dbReference>
<dbReference type="EMBL" id="AP009048">
    <property type="protein sequence ID" value="BAE76837.1"/>
    <property type="molecule type" value="Genomic_DNA"/>
</dbReference>
<dbReference type="PIR" id="D65057">
    <property type="entry name" value="D65057"/>
</dbReference>
<dbReference type="RefSeq" id="NP_417240.1">
    <property type="nucleotide sequence ID" value="NC_000913.3"/>
</dbReference>
<dbReference type="RefSeq" id="WP_001050401.1">
    <property type="nucleotide sequence ID" value="NZ_LN832404.1"/>
</dbReference>
<dbReference type="PDB" id="4QYZ">
    <property type="method" value="X-ray"/>
    <property type="resolution" value="3.03 A"/>
    <property type="chains" value="A=1-502"/>
</dbReference>
<dbReference type="PDB" id="4TVX">
    <property type="method" value="X-ray"/>
    <property type="resolution" value="3.24 A"/>
    <property type="chains" value="I/U=1-502"/>
</dbReference>
<dbReference type="PDB" id="4U7U">
    <property type="method" value="X-ray"/>
    <property type="resolution" value="3.00 A"/>
    <property type="chains" value="A/M=1-502"/>
</dbReference>
<dbReference type="PDB" id="5CD4">
    <property type="method" value="X-ray"/>
    <property type="resolution" value="3.20 A"/>
    <property type="chains" value="I/U=1-502"/>
</dbReference>
<dbReference type="PDB" id="5H9E">
    <property type="method" value="X-ray"/>
    <property type="resolution" value="3.21 A"/>
    <property type="chains" value="A=1-502"/>
</dbReference>
<dbReference type="PDB" id="5H9F">
    <property type="method" value="X-ray"/>
    <property type="resolution" value="2.45 A"/>
    <property type="chains" value="A=1-502"/>
</dbReference>
<dbReference type="PDBsum" id="4QYZ"/>
<dbReference type="PDBsum" id="4TVX"/>
<dbReference type="PDBsum" id="4U7U"/>
<dbReference type="PDBsum" id="5CD4"/>
<dbReference type="PDBsum" id="5H9E"/>
<dbReference type="PDBsum" id="5H9F"/>
<dbReference type="EMDB" id="EMD-5929"/>
<dbReference type="EMDB" id="EMD-5930"/>
<dbReference type="SMR" id="Q46901"/>
<dbReference type="BioGRID" id="4260748">
    <property type="interactions" value="364"/>
</dbReference>
<dbReference type="BioGRID" id="851554">
    <property type="interactions" value="1"/>
</dbReference>
<dbReference type="ComplexPortal" id="CPX-1005">
    <property type="entry name" value="Cascade complex"/>
</dbReference>
<dbReference type="DIP" id="DIP-12128N"/>
<dbReference type="FunCoup" id="Q46901">
    <property type="interactions" value="20"/>
</dbReference>
<dbReference type="IntAct" id="Q46901">
    <property type="interactions" value="8"/>
</dbReference>
<dbReference type="STRING" id="511145.b2760"/>
<dbReference type="PaxDb" id="511145-b2760"/>
<dbReference type="EnsemblBacteria" id="AAC75802">
    <property type="protein sequence ID" value="AAC75802"/>
    <property type="gene ID" value="b2760"/>
</dbReference>
<dbReference type="GeneID" id="947222"/>
<dbReference type="KEGG" id="ecj:JW2730"/>
<dbReference type="KEGG" id="eco:b2760"/>
<dbReference type="KEGG" id="ecoc:C3026_15170"/>
<dbReference type="PATRIC" id="fig|1411691.4.peg.3978"/>
<dbReference type="EchoBASE" id="EB2920"/>
<dbReference type="eggNOG" id="ENOG502Z880">
    <property type="taxonomic scope" value="Bacteria"/>
</dbReference>
<dbReference type="HOGENOM" id="CLU_541555_0_0_6"/>
<dbReference type="InParanoid" id="Q46901"/>
<dbReference type="OMA" id="MNIKGEC"/>
<dbReference type="OrthoDB" id="5392377at2"/>
<dbReference type="BioCyc" id="EcoCyc:G7430-MONOMER"/>
<dbReference type="BioCyc" id="MetaCyc:G7430-MONOMER"/>
<dbReference type="EvolutionaryTrace" id="Q46901"/>
<dbReference type="PRO" id="PR:Q46901"/>
<dbReference type="Proteomes" id="UP000000625">
    <property type="component" value="Chromosome"/>
</dbReference>
<dbReference type="GO" id="GO:0032991">
    <property type="term" value="C:protein-containing complex"/>
    <property type="evidence" value="ECO:0000314"/>
    <property type="project" value="EcoCyc"/>
</dbReference>
<dbReference type="GO" id="GO:0003677">
    <property type="term" value="F:DNA binding"/>
    <property type="evidence" value="ECO:0000314"/>
    <property type="project" value="EcoCyc"/>
</dbReference>
<dbReference type="GO" id="GO:0003723">
    <property type="term" value="F:RNA binding"/>
    <property type="evidence" value="ECO:0000314"/>
    <property type="project" value="EcoCyc"/>
</dbReference>
<dbReference type="GO" id="GO:0008270">
    <property type="term" value="F:zinc ion binding"/>
    <property type="evidence" value="ECO:0000314"/>
    <property type="project" value="EcoCyc"/>
</dbReference>
<dbReference type="GO" id="GO:0099048">
    <property type="term" value="P:CRISPR-cas system"/>
    <property type="evidence" value="ECO:0000314"/>
    <property type="project" value="ComplexPortal"/>
</dbReference>
<dbReference type="GO" id="GO:0051607">
    <property type="term" value="P:defense response to virus"/>
    <property type="evidence" value="ECO:0000315"/>
    <property type="project" value="EcoCyc"/>
</dbReference>
<dbReference type="CDD" id="cd09669">
    <property type="entry name" value="Cse1_I-E"/>
    <property type="match status" value="1"/>
</dbReference>
<dbReference type="InterPro" id="IPR013381">
    <property type="entry name" value="CRISPR-assoc_prot_Cse1"/>
</dbReference>
<dbReference type="NCBIfam" id="TIGR02547">
    <property type="entry name" value="casA_cse1"/>
    <property type="match status" value="1"/>
</dbReference>
<dbReference type="NCBIfam" id="NF007247">
    <property type="entry name" value="PRK09693.1"/>
    <property type="match status" value="1"/>
</dbReference>
<dbReference type="Pfam" id="PF09481">
    <property type="entry name" value="CRISPR_Cse1"/>
    <property type="match status" value="1"/>
</dbReference>
<feature type="chain" id="PRO_0000169324" description="CRISPR system Cascade subunit CasA">
    <location>
        <begin position="1"/>
        <end position="502"/>
    </location>
</feature>
<feature type="mutagenesis site" description="80% increase in phage sensitivity; 500-fold decrease in affinity for target dsDNA." evidence="9">
    <original>F</original>
    <variation>A</variation>
    <location>
        <position position="129"/>
    </location>
</feature>
<feature type="mutagenesis site" description="20% increase in phage sensitivity; no change in binding of target dsDNA." evidence="9">
    <original>V</original>
    <variation>A</variation>
    <location>
        <position position="130"/>
    </location>
</feature>
<feature type="mutagenesis site" description="45% increase in phage sensitivity; 60-fold decrease in affinity for target dsDNA." evidence="9">
    <original>N</original>
    <variation>A</variation>
    <location>
        <position position="131"/>
    </location>
</feature>
<feature type="turn" evidence="12">
    <location>
        <begin position="3"/>
        <end position="5"/>
    </location>
</feature>
<feature type="strand" evidence="12">
    <location>
        <begin position="9"/>
        <end position="13"/>
    </location>
</feature>
<feature type="strand" evidence="12">
    <location>
        <begin position="20"/>
        <end position="22"/>
    </location>
</feature>
<feature type="helix" evidence="12">
    <location>
        <begin position="24"/>
        <end position="28"/>
    </location>
</feature>
<feature type="strand" evidence="12">
    <location>
        <begin position="34"/>
        <end position="36"/>
    </location>
</feature>
<feature type="helix" evidence="12">
    <location>
        <begin position="41"/>
        <end position="58"/>
    </location>
</feature>
<feature type="helix" evidence="12">
    <location>
        <begin position="64"/>
        <end position="72"/>
    </location>
</feature>
<feature type="helix" evidence="12">
    <location>
        <begin position="77"/>
        <end position="84"/>
    </location>
</feature>
<feature type="helix" evidence="12">
    <location>
        <begin position="85"/>
        <end position="90"/>
    </location>
</feature>
<feature type="strand" evidence="11">
    <location>
        <begin position="92"/>
        <end position="94"/>
    </location>
</feature>
<feature type="helix" evidence="12">
    <location>
        <begin position="114"/>
        <end position="117"/>
    </location>
</feature>
<feature type="strand" evidence="12">
    <location>
        <begin position="121"/>
        <end position="124"/>
    </location>
</feature>
<feature type="helix" evidence="12">
    <location>
        <begin position="127"/>
        <end position="130"/>
    </location>
</feature>
<feature type="strand" evidence="12">
    <location>
        <begin position="137"/>
        <end position="139"/>
    </location>
</feature>
<feature type="helix" evidence="12">
    <location>
        <begin position="141"/>
        <end position="153"/>
    </location>
</feature>
<feature type="strand" evidence="12">
    <location>
        <begin position="173"/>
        <end position="176"/>
    </location>
</feature>
<feature type="helix" evidence="12">
    <location>
        <begin position="181"/>
        <end position="187"/>
    </location>
</feature>
<feature type="helix" evidence="12">
    <location>
        <begin position="192"/>
        <end position="198"/>
    </location>
</feature>
<feature type="turn" evidence="12">
    <location>
        <begin position="210"/>
        <end position="212"/>
    </location>
</feature>
<feature type="strand" evidence="12">
    <location>
        <begin position="220"/>
        <end position="222"/>
    </location>
</feature>
<feature type="helix" evidence="12">
    <location>
        <begin position="223"/>
        <end position="225"/>
    </location>
</feature>
<feature type="helix" evidence="12">
    <location>
        <begin position="228"/>
        <end position="232"/>
    </location>
</feature>
<feature type="strand" evidence="12">
    <location>
        <begin position="237"/>
        <end position="241"/>
    </location>
</feature>
<feature type="strand" evidence="12">
    <location>
        <begin position="247"/>
        <end position="249"/>
    </location>
</feature>
<feature type="turn" evidence="12">
    <location>
        <begin position="251"/>
        <end position="253"/>
    </location>
</feature>
<feature type="strand" evidence="12">
    <location>
        <begin position="256"/>
        <end position="258"/>
    </location>
</feature>
<feature type="strand" evidence="12">
    <location>
        <begin position="264"/>
        <end position="267"/>
    </location>
</feature>
<feature type="strand" evidence="12">
    <location>
        <begin position="272"/>
        <end position="275"/>
    </location>
</feature>
<feature type="strand" evidence="11">
    <location>
        <begin position="280"/>
        <end position="282"/>
    </location>
</feature>
<feature type="strand" evidence="12">
    <location>
        <begin position="284"/>
        <end position="289"/>
    </location>
</feature>
<feature type="strand" evidence="12">
    <location>
        <begin position="292"/>
        <end position="297"/>
    </location>
</feature>
<feature type="turn" evidence="12">
    <location>
        <begin position="308"/>
        <end position="310"/>
    </location>
</feature>
<feature type="helix" evidence="12">
    <location>
        <begin position="311"/>
        <end position="321"/>
    </location>
</feature>
<feature type="strand" evidence="11">
    <location>
        <begin position="324"/>
        <end position="326"/>
    </location>
</feature>
<feature type="helix" evidence="12">
    <location>
        <begin position="329"/>
        <end position="337"/>
    </location>
</feature>
<feature type="strand" evidence="12">
    <location>
        <begin position="345"/>
        <end position="353"/>
    </location>
</feature>
<feature type="strand" evidence="12">
    <location>
        <begin position="356"/>
        <end position="363"/>
    </location>
</feature>
<feature type="helix" evidence="11">
    <location>
        <begin position="369"/>
        <end position="372"/>
    </location>
</feature>
<feature type="helix" evidence="12">
    <location>
        <begin position="376"/>
        <end position="405"/>
    </location>
</feature>
<feature type="helix" evidence="12">
    <location>
        <begin position="411"/>
        <end position="414"/>
    </location>
</feature>
<feature type="helix" evidence="12">
    <location>
        <begin position="415"/>
        <end position="428"/>
    </location>
</feature>
<feature type="helix" evidence="12">
    <location>
        <begin position="431"/>
        <end position="437"/>
    </location>
</feature>
<feature type="turn" evidence="12">
    <location>
        <begin position="440"/>
        <end position="442"/>
    </location>
</feature>
<feature type="helix" evidence="12">
    <location>
        <begin position="443"/>
        <end position="466"/>
    </location>
</feature>
<feature type="helix" evidence="12">
    <location>
        <begin position="467"/>
        <end position="469"/>
    </location>
</feature>
<feature type="helix" evidence="12">
    <location>
        <begin position="473"/>
        <end position="475"/>
    </location>
</feature>
<feature type="helix" evidence="12">
    <location>
        <begin position="476"/>
        <end position="491"/>
    </location>
</feature>
<reference key="1">
    <citation type="journal article" date="1997" name="Science">
        <title>The complete genome sequence of Escherichia coli K-12.</title>
        <authorList>
            <person name="Blattner F.R."/>
            <person name="Plunkett G. III"/>
            <person name="Bloch C.A."/>
            <person name="Perna N.T."/>
            <person name="Burland V."/>
            <person name="Riley M."/>
            <person name="Collado-Vides J."/>
            <person name="Glasner J.D."/>
            <person name="Rode C.K."/>
            <person name="Mayhew G.F."/>
            <person name="Gregor J."/>
            <person name="Davis N.W."/>
            <person name="Kirkpatrick H.A."/>
            <person name="Goeden M.A."/>
            <person name="Rose D.J."/>
            <person name="Mau B."/>
            <person name="Shao Y."/>
        </authorList>
    </citation>
    <scope>NUCLEOTIDE SEQUENCE [LARGE SCALE GENOMIC DNA]</scope>
    <source>
        <strain>K12 / MG1655 / ATCC 47076</strain>
    </source>
</reference>
<reference key="2">
    <citation type="journal article" date="2006" name="Mol. Syst. Biol.">
        <title>Highly accurate genome sequences of Escherichia coli K-12 strains MG1655 and W3110.</title>
        <authorList>
            <person name="Hayashi K."/>
            <person name="Morooka N."/>
            <person name="Yamamoto Y."/>
            <person name="Fujita K."/>
            <person name="Isono K."/>
            <person name="Choi S."/>
            <person name="Ohtsubo E."/>
            <person name="Baba T."/>
            <person name="Wanner B.L."/>
            <person name="Mori H."/>
            <person name="Horiuchi T."/>
        </authorList>
    </citation>
    <scope>NUCLEOTIDE SEQUENCE [LARGE SCALE GENOMIC DNA]</scope>
    <source>
        <strain>K12 / W3110 / ATCC 27325 / DSM 5911</strain>
    </source>
</reference>
<reference key="3">
    <citation type="journal article" date="2008" name="Science">
        <title>Small CRISPR RNAs guide antiviral defense in prokaryotes.</title>
        <authorList>
            <person name="Brouns S.J."/>
            <person name="Jore M.M."/>
            <person name="Lundgren M."/>
            <person name="Westra E.R."/>
            <person name="Slijkhuis R.J."/>
            <person name="Snijders A.P."/>
            <person name="Dickman M.J."/>
            <person name="Makarova K.S."/>
            <person name="Koonin E.V."/>
            <person name="van der Oost J."/>
        </authorList>
    </citation>
    <scope>SUBUNIT</scope>
    <scope>DISRUPTION PHENOTYPE</scope>
    <source>
        <strain>K12 / W3110 / ATCC 27325 / DSM 5911</strain>
    </source>
</reference>
<reference key="4">
    <citation type="journal article" date="2009" name="J. Bacteriol.">
        <title>Involvement of the leucine response transcription factor LeuO in regulation of the genes for sulfa drug efflux.</title>
        <authorList>
            <person name="Shimada T."/>
            <person name="Yamamoto K."/>
            <person name="Ishihama A."/>
        </authorList>
    </citation>
    <scope>OPERON STRUCTURE</scope>
    <scope>INDUCTION BY LEUO</scope>
    <source>
        <strain>K12 / BW25113</strain>
    </source>
</reference>
<reference key="5">
    <citation type="journal article" date="2010" name="Mol. Microbiol.">
        <title>Identification and characterization of E. coli CRISPR-cas promoters and their silencing by H-NS.</title>
        <authorList>
            <person name="Pul U."/>
            <person name="Wurm R."/>
            <person name="Arslan Z."/>
            <person name="Geissen R."/>
            <person name="Hofmann N."/>
            <person name="Wagner R."/>
        </authorList>
    </citation>
    <scope>INDUCTION BY H-NS</scope>
    <source>
        <strain>K12</strain>
    </source>
</reference>
<reference key="6">
    <citation type="journal article" date="2010" name="Mol. Microbiol.">
        <title>H-NS-mediated repression of CRISPR-based immunity in Escherichia coli K12 can be relieved by the transcription activator LeuO.</title>
        <authorList>
            <person name="Westra E.R."/>
            <person name="Pul U."/>
            <person name="Heidrich N."/>
            <person name="Jore M.M."/>
            <person name="Lundgren M."/>
            <person name="Stratmann T."/>
            <person name="Wurm R."/>
            <person name="Raine A."/>
            <person name="Mescher M."/>
            <person name="Van Heereveld L."/>
            <person name="Mastop M."/>
            <person name="Wagner E.G."/>
            <person name="Schnetz K."/>
            <person name="Van Der Oost J."/>
            <person name="Wagner R."/>
            <person name="Brouns S.J."/>
        </authorList>
    </citation>
    <scope>INDUCTION BY LEUO</scope>
    <source>
        <strain>K12</strain>
    </source>
</reference>
<reference key="7">
    <citation type="journal article" date="2011" name="Mol. Microbiol.">
        <title>Envelope stress is a trigger of CRISPR RNA-mediated DNA silencing in Escherichia coli.</title>
        <authorList>
            <person name="Perez-Rodriguez R."/>
            <person name="Haitjema C."/>
            <person name="Huang Q."/>
            <person name="Nam K.H."/>
            <person name="Bernardis S."/>
            <person name="Ke A."/>
            <person name="DeLisa M.P."/>
        </authorList>
    </citation>
    <scope>SUBUNIT</scope>
    <scope>INDUCTION BY BAER</scope>
    <scope>ROLE IN PLASMID SILENCING</scope>
    <scope>DISRUPTION PHENOTYPE</scope>
    <source>
        <strain>K12 / BW25113</strain>
    </source>
</reference>
<reference key="8">
    <citation type="journal article" date="2011" name="Nature">
        <title>Structures of the RNA-guided surveillance complex from a bacterial immune system.</title>
        <authorList>
            <person name="Wiedenheft B."/>
            <person name="Lander G.C."/>
            <person name="Zhou K."/>
            <person name="Jore M.M."/>
            <person name="Brouns S.J."/>
            <person name="van der Oost J."/>
            <person name="Doudna J.A."/>
            <person name="Nogales E."/>
        </authorList>
    </citation>
    <scope>STRUCTURE BY ELECTRON MICROSCOPY OF CASCADE WITH AND WITHOUT TARGET RNA</scope>
    <scope>RNA-BINDING</scope>
    <scope>INTERACTION WITH CASB AND CASD</scope>
    <source>
        <strain>K12</strain>
    </source>
</reference>
<reference key="9">
    <citation type="journal article" date="2011" name="Nat. Struct. Mol. Biol.">
        <title>Structural basis for CRISPR RNA-guided DNA recognition by Cascade.</title>
        <authorList>
            <person name="Jore M.M."/>
            <person name="Lundgren M."/>
            <person name="van Duijn E."/>
            <person name="Bultema J.B."/>
            <person name="Westra E.R."/>
            <person name="Waghmare S.P."/>
            <person name="Wiedenheft B."/>
            <person name="Pul U."/>
            <person name="Wurm R."/>
            <person name="Wagner R."/>
            <person name="Beijer M.R."/>
            <person name="Barendregt A."/>
            <person name="Zhou K."/>
            <person name="Snijders A.P."/>
            <person name="Dickman M.J."/>
            <person name="Doudna J.A."/>
            <person name="Boekema E.J."/>
            <person name="Heck A.J."/>
            <person name="van der Oost J."/>
            <person name="Brouns S.J."/>
        </authorList>
    </citation>
    <scope>FUNCTION IN CASCADE</scope>
    <scope>MASS SPECTROMETRY</scope>
    <scope>SUBUNIT</scope>
    <scope>STRUCTURE BY ELECTRON MICROSCOPY</scope>
    <scope>INTERACTION WITH CASE</scope>
    <scope>DISRUPTION PHENOTYPE</scope>
    <source>
        <strain>K12</strain>
    </source>
</reference>
<reference key="10">
    <citation type="journal article" date="2012" name="J. Biol. Chem.">
        <title>Crystal structure of the largest subunit of a bacterial RNA-guided immune complex and its role in DNA target binding.</title>
        <authorList>
            <person name="Mulepati S."/>
            <person name="Orr A."/>
            <person name="Bailey S."/>
        </authorList>
    </citation>
    <scope>FUNCTION IN TARGET DNA-BINDING IN PRESENCE OF CASCADE</scope>
</reference>
<reference key="11">
    <citation type="journal article" date="2012" name="Mol. Cell">
        <title>CRISPR immunity relies on the consecutive binding and degradation of negatively supercoiled invader DNA by Cascade and Cas3.</title>
        <authorList>
            <person name="Westra E.R."/>
            <person name="van Erp P.B."/>
            <person name="Kunne T."/>
            <person name="Wong S.P."/>
            <person name="Staals R.H."/>
            <person name="Seegers C.L."/>
            <person name="Bollen S."/>
            <person name="Jore M.M."/>
            <person name="Semenova E."/>
            <person name="Severinov K."/>
            <person name="de Vos W.M."/>
            <person name="Dame R.T."/>
            <person name="de Vries R."/>
            <person name="Brouns S.J."/>
            <person name="van der Oost J."/>
        </authorList>
    </citation>
    <scope>INTERACTION WITH CAS3</scope>
    <scope>SUBUNIT</scope>
    <scope>CASCADE DNA-BINDING</scope>
    <source>
        <strain>K12 / MG1655 / ATCC 47076</strain>
    </source>
</reference>
<reference key="12">
    <citation type="journal article" date="2012" name="Mol. Cell">
        <title>Mechanism of foreign DNA selection in a bacterial adaptive immune system.</title>
        <authorList>
            <person name="Sashital D.G."/>
            <person name="Wiedenheft B."/>
            <person name="Doudna J.A."/>
        </authorList>
    </citation>
    <scope>FUNCTION IN TARGET DNA-BINDING IN PRESENCE OF CASCADE</scope>
    <scope>MUTAGENESIS OF PHE-129; VAL-130 AND ASN-131</scope>
    <source>
        <strain>K12</strain>
    </source>
</reference>
<sequence length="502" mass="55901">MNLLIDNWIPVRPRNGGKVQIINLQSLYCSRDQWRLSLPRDDMELAALALLVCIGQIIAPAKDDVEFRHRIMNPLTEDEFQQLIAPWIDMFYLNHAEHPFMQTKGVKANDVTPMEKLLAGVSGATNCAFVNQPGQGEALCGGCTAIALFNQANQAPGFGGGFKSGLRGGTPVTTFVRGIDLRSTVLLNVLTLPRLQKQFPNESHTENQPTWIKPIKSNESIPASSIGFVRGLFWQPAHIELCDPIGIGKCSCCGQESNLRYTGFLKEKFTFTVNGLWPHPHSPCLVTVKKGEVEEKFLAFTTSAPSWTQISRVVVDKIIQNENGNRVAAVVNQFRNIAPQSPLELIMGGYRNNQASILERRHDVLMFNQGWQQYGNVINEIVTVGLGYKTALRKALYTFAEGFKNKDFKGAGVSVHETAERHFYRQSELLIPDVLANVNFSQADEVIADLRDKLHQLCEMLFNQSVAPYAHHPKLISTLALARATLYKHLRELKPQGGPSNG</sequence>